<protein>
    <recommendedName>
        <fullName>3-ketoacyl-CoA thiolase, peroxisomal</fullName>
        <ecNumber>2.3.1.16</ecNumber>
    </recommendedName>
    <alternativeName>
        <fullName>Acetyl-CoA acyltransferase</fullName>
    </alternativeName>
    <alternativeName>
        <fullName>Beta-ketothiolase</fullName>
    </alternativeName>
    <alternativeName>
        <fullName>Peroxisomal 3-oxoacyl-CoA thiolase</fullName>
    </alternativeName>
</protein>
<name>THIK_ENCCU</name>
<sequence length="391" mass="41775">MISHEDVVVVGALRTPIGRATRGKLRSLRNDELVTAAIRGIIEKTGIDPRLIEEVILGHCLSSMEGNVAARMGVLRAGVPVETPVMIINRLCGSGLESVGLIAEKIRSGRIEIGLAGGFESMTSYGLPKEYTLSRGGACEDAEDCMLTLGEVSEMLGKTHGVTRSEADEYAVTSQKRALEATKKGHFLAEIIPMRVGDETVERDEGIRETSLGTIESLKPVFRQDGVCTSANSSQLSDGASAVLLMKRRRADELGLPVVAEFIDFIAVGLKPRDMGLGPVVAIEKLLKRNGLEKDQISYFEINEAFASQVLCCLRKLQIGEDRVNRYGGSIALGHPIGASGARIVCTLLSVMKNEALEGYGVASLCVGAGHGVAALFRRAAGSKPQDIKNT</sequence>
<organism>
    <name type="scientific">Encephalitozoon cuniculi (strain GB-M1)</name>
    <name type="common">Microsporidian parasite</name>
    <dbReference type="NCBI Taxonomy" id="284813"/>
    <lineage>
        <taxon>Eukaryota</taxon>
        <taxon>Fungi</taxon>
        <taxon>Fungi incertae sedis</taxon>
        <taxon>Microsporidia</taxon>
        <taxon>Unikaryonidae</taxon>
        <taxon>Encephalitozoon</taxon>
    </lineage>
</organism>
<accession>Q8SVA6</accession>
<feature type="transit peptide" description="Peroxisome">
    <location>
        <begin position="1"/>
        <end status="unknown"/>
    </location>
</feature>
<feature type="chain" id="PRO_0000381750" description="3-ketoacyl-CoA thiolase, peroxisomal">
    <location>
        <begin status="unknown"/>
        <end position="391"/>
    </location>
</feature>
<feature type="active site" description="Acyl-thioester intermediate" evidence="1">
    <location>
        <position position="92"/>
    </location>
</feature>
<feature type="active site" description="Proton acceptor" evidence="2">
    <location>
        <position position="335"/>
    </location>
</feature>
<feature type="active site" description="Proton acceptor" evidence="2">
    <location>
        <position position="366"/>
    </location>
</feature>
<reference key="1">
    <citation type="journal article" date="2001" name="Nature">
        <title>Genome sequence and gene compaction of the eukaryote parasite Encephalitozoon cuniculi.</title>
        <authorList>
            <person name="Katinka M.D."/>
            <person name="Duprat S."/>
            <person name="Cornillot E."/>
            <person name="Metenier G."/>
            <person name="Thomarat F."/>
            <person name="Prensier G."/>
            <person name="Barbe V."/>
            <person name="Peyretaillade E."/>
            <person name="Brottier P."/>
            <person name="Wincker P."/>
            <person name="Delbac F."/>
            <person name="El Alaoui H."/>
            <person name="Peyret P."/>
            <person name="Saurin W."/>
            <person name="Gouy M."/>
            <person name="Weissenbach J."/>
            <person name="Vivares C.P."/>
        </authorList>
    </citation>
    <scope>NUCLEOTIDE SEQUENCE [LARGE SCALE GENOMIC DNA]</scope>
    <source>
        <strain>GB-M1</strain>
    </source>
</reference>
<reference key="2">
    <citation type="journal article" date="2006" name="Proteomics">
        <title>Proteomic analysis of the eukaryotic parasite Encephalitozoon cuniculi (microsporidia): a reference map for proteins expressed in late sporogonial stages.</title>
        <authorList>
            <person name="Brosson D."/>
            <person name="Kuhn L."/>
            <person name="Delbac F."/>
            <person name="Garin J."/>
            <person name="Vivares C.P."/>
            <person name="Texier C."/>
        </authorList>
    </citation>
    <scope>IDENTIFICATION BY MASS SPECTROMETRY [LARGE SCALE ANALYSIS]</scope>
    <scope>DEVELOPMENTAL STAGE</scope>
</reference>
<comment type="catalytic activity">
    <reaction>
        <text>an acyl-CoA + acetyl-CoA = a 3-oxoacyl-CoA + CoA</text>
        <dbReference type="Rhea" id="RHEA:21564"/>
        <dbReference type="ChEBI" id="CHEBI:57287"/>
        <dbReference type="ChEBI" id="CHEBI:57288"/>
        <dbReference type="ChEBI" id="CHEBI:58342"/>
        <dbReference type="ChEBI" id="CHEBI:90726"/>
        <dbReference type="EC" id="2.3.1.16"/>
    </reaction>
</comment>
<comment type="pathway">
    <text>Lipid metabolism; fatty acid metabolism.</text>
</comment>
<comment type="subunit">
    <text evidence="1">Homodimer.</text>
</comment>
<comment type="subcellular location">
    <subcellularLocation>
        <location>Peroxisome</location>
    </subcellularLocation>
</comment>
<comment type="developmental stage">
    <text evidence="3">Expressed in late sporogonial stages.</text>
</comment>
<comment type="similarity">
    <text evidence="4">Belongs to the thiolase-like superfamily. Thiolase family.</text>
</comment>
<evidence type="ECO:0000250" key="1"/>
<evidence type="ECO:0000255" key="2">
    <source>
        <dbReference type="PROSITE-ProRule" id="PRU10020"/>
    </source>
</evidence>
<evidence type="ECO:0000269" key="3">
    <source>
    </source>
</evidence>
<evidence type="ECO:0000305" key="4"/>
<dbReference type="EC" id="2.3.1.16"/>
<dbReference type="EMBL" id="AL590446">
    <property type="protein sequence ID" value="CAD25454.1"/>
    <property type="molecule type" value="Genomic_DNA"/>
</dbReference>
<dbReference type="RefSeq" id="NP_585850.1">
    <property type="nucleotide sequence ID" value="NM_001041472.1"/>
</dbReference>
<dbReference type="SMR" id="Q8SVA6"/>
<dbReference type="FunCoup" id="Q8SVA6">
    <property type="interactions" value="67"/>
</dbReference>
<dbReference type="STRING" id="284813.Q8SVA6"/>
<dbReference type="GeneID" id="859275"/>
<dbReference type="KEGG" id="ecu:ECU06_0940"/>
<dbReference type="VEuPathDB" id="MicrosporidiaDB:ECU06_0940"/>
<dbReference type="HOGENOM" id="CLU_031026_1_1_1"/>
<dbReference type="InParanoid" id="Q8SVA6"/>
<dbReference type="OMA" id="QMGMDHL"/>
<dbReference type="OrthoDB" id="5404651at2759"/>
<dbReference type="UniPathway" id="UPA00199"/>
<dbReference type="Proteomes" id="UP000000819">
    <property type="component" value="Chromosome VI"/>
</dbReference>
<dbReference type="GO" id="GO:0005777">
    <property type="term" value="C:peroxisome"/>
    <property type="evidence" value="ECO:0007669"/>
    <property type="project" value="UniProtKB-SubCell"/>
</dbReference>
<dbReference type="GO" id="GO:0003988">
    <property type="term" value="F:acetyl-CoA C-acyltransferase activity"/>
    <property type="evidence" value="ECO:0007669"/>
    <property type="project" value="UniProtKB-EC"/>
</dbReference>
<dbReference type="GO" id="GO:0006635">
    <property type="term" value="P:fatty acid beta-oxidation"/>
    <property type="evidence" value="ECO:0007669"/>
    <property type="project" value="TreeGrafter"/>
</dbReference>
<dbReference type="GO" id="GO:0010124">
    <property type="term" value="P:phenylacetate catabolic process"/>
    <property type="evidence" value="ECO:0007669"/>
    <property type="project" value="TreeGrafter"/>
</dbReference>
<dbReference type="CDD" id="cd00751">
    <property type="entry name" value="thiolase"/>
    <property type="match status" value="1"/>
</dbReference>
<dbReference type="Gene3D" id="3.40.47.10">
    <property type="match status" value="2"/>
</dbReference>
<dbReference type="InterPro" id="IPR002155">
    <property type="entry name" value="Thiolase"/>
</dbReference>
<dbReference type="InterPro" id="IPR016039">
    <property type="entry name" value="Thiolase-like"/>
</dbReference>
<dbReference type="InterPro" id="IPR050215">
    <property type="entry name" value="Thiolase-like_sf_Thiolase"/>
</dbReference>
<dbReference type="InterPro" id="IPR020615">
    <property type="entry name" value="Thiolase_acyl_enz_int_AS"/>
</dbReference>
<dbReference type="InterPro" id="IPR020610">
    <property type="entry name" value="Thiolase_AS"/>
</dbReference>
<dbReference type="InterPro" id="IPR020617">
    <property type="entry name" value="Thiolase_C"/>
</dbReference>
<dbReference type="InterPro" id="IPR020613">
    <property type="entry name" value="Thiolase_CS"/>
</dbReference>
<dbReference type="InterPro" id="IPR020616">
    <property type="entry name" value="Thiolase_N"/>
</dbReference>
<dbReference type="NCBIfam" id="TIGR01930">
    <property type="entry name" value="AcCoA-C-Actrans"/>
    <property type="match status" value="1"/>
</dbReference>
<dbReference type="PANTHER" id="PTHR43853">
    <property type="entry name" value="3-KETOACYL-COA THIOLASE, PEROXISOMAL"/>
    <property type="match status" value="1"/>
</dbReference>
<dbReference type="PANTHER" id="PTHR43853:SF8">
    <property type="entry name" value="3-KETOACYL-COA THIOLASE, PEROXISOMAL"/>
    <property type="match status" value="1"/>
</dbReference>
<dbReference type="Pfam" id="PF02803">
    <property type="entry name" value="Thiolase_C"/>
    <property type="match status" value="1"/>
</dbReference>
<dbReference type="Pfam" id="PF00108">
    <property type="entry name" value="Thiolase_N"/>
    <property type="match status" value="1"/>
</dbReference>
<dbReference type="PIRSF" id="PIRSF000429">
    <property type="entry name" value="Ac-CoA_Ac_transf"/>
    <property type="match status" value="1"/>
</dbReference>
<dbReference type="SUPFAM" id="SSF53901">
    <property type="entry name" value="Thiolase-like"/>
    <property type="match status" value="2"/>
</dbReference>
<dbReference type="PROSITE" id="PS00098">
    <property type="entry name" value="THIOLASE_1"/>
    <property type="match status" value="1"/>
</dbReference>
<dbReference type="PROSITE" id="PS00737">
    <property type="entry name" value="THIOLASE_2"/>
    <property type="match status" value="1"/>
</dbReference>
<dbReference type="PROSITE" id="PS00099">
    <property type="entry name" value="THIOLASE_3"/>
    <property type="match status" value="1"/>
</dbReference>
<gene>
    <name type="primary">FOX3</name>
    <name type="ordered locus">ECU06_0940</name>
</gene>
<keyword id="KW-0012">Acyltransferase</keyword>
<keyword id="KW-0276">Fatty acid metabolism</keyword>
<keyword id="KW-0443">Lipid metabolism</keyword>
<keyword id="KW-0576">Peroxisome</keyword>
<keyword id="KW-1185">Reference proteome</keyword>
<keyword id="KW-0808">Transferase</keyword>
<keyword id="KW-0809">Transit peptide</keyword>
<proteinExistence type="evidence at protein level"/>